<gene>
    <name evidence="1" type="primary">acpP</name>
    <name type="ordered locus">Teth39_1286</name>
</gene>
<organism>
    <name type="scientific">Thermoanaerobacter pseudethanolicus (strain ATCC 33223 / 39E)</name>
    <name type="common">Clostridium thermohydrosulfuricum</name>
    <dbReference type="NCBI Taxonomy" id="340099"/>
    <lineage>
        <taxon>Bacteria</taxon>
        <taxon>Bacillati</taxon>
        <taxon>Bacillota</taxon>
        <taxon>Clostridia</taxon>
        <taxon>Thermoanaerobacterales</taxon>
        <taxon>Thermoanaerobacteraceae</taxon>
        <taxon>Thermoanaerobacter</taxon>
    </lineage>
</organism>
<evidence type="ECO:0000255" key="1">
    <source>
        <dbReference type="HAMAP-Rule" id="MF_01217"/>
    </source>
</evidence>
<evidence type="ECO:0000255" key="2">
    <source>
        <dbReference type="PROSITE-ProRule" id="PRU00258"/>
    </source>
</evidence>
<keyword id="KW-0963">Cytoplasm</keyword>
<keyword id="KW-0275">Fatty acid biosynthesis</keyword>
<keyword id="KW-0276">Fatty acid metabolism</keyword>
<keyword id="KW-0444">Lipid biosynthesis</keyword>
<keyword id="KW-0443">Lipid metabolism</keyword>
<keyword id="KW-0596">Phosphopantetheine</keyword>
<keyword id="KW-0597">Phosphoprotein</keyword>
<keyword id="KW-1185">Reference proteome</keyword>
<comment type="function">
    <text evidence="1">Carrier of the growing fatty acid chain in fatty acid biosynthesis.</text>
</comment>
<comment type="pathway">
    <text evidence="1">Lipid metabolism; fatty acid biosynthesis.</text>
</comment>
<comment type="subcellular location">
    <subcellularLocation>
        <location evidence="1">Cytoplasm</location>
    </subcellularLocation>
</comment>
<comment type="PTM">
    <text evidence="1">4'-phosphopantetheine is transferred from CoA to a specific serine of apo-ACP by AcpS. This modification is essential for activity because fatty acids are bound in thioester linkage to the sulfhydryl of the prosthetic group.</text>
</comment>
<comment type="similarity">
    <text evidence="1">Belongs to the acyl carrier protein (ACP) family.</text>
</comment>
<protein>
    <recommendedName>
        <fullName evidence="1">Acyl carrier protein</fullName>
        <shortName evidence="1">ACP</shortName>
    </recommendedName>
</protein>
<reference key="1">
    <citation type="submission" date="2008-01" db="EMBL/GenBank/DDBJ databases">
        <title>Complete sequence of Thermoanaerobacter pseudethanolicus 39E.</title>
        <authorList>
            <person name="Copeland A."/>
            <person name="Lucas S."/>
            <person name="Lapidus A."/>
            <person name="Barry K."/>
            <person name="Glavina del Rio T."/>
            <person name="Dalin E."/>
            <person name="Tice H."/>
            <person name="Pitluck S."/>
            <person name="Bruce D."/>
            <person name="Goodwin L."/>
            <person name="Saunders E."/>
            <person name="Brettin T."/>
            <person name="Detter J.C."/>
            <person name="Han C."/>
            <person name="Schmutz J."/>
            <person name="Larimer F."/>
            <person name="Land M."/>
            <person name="Hauser L."/>
            <person name="Kyrpides N."/>
            <person name="Lykidis A."/>
            <person name="Hemme C."/>
            <person name="Fields M.W."/>
            <person name="He Z."/>
            <person name="Zhou J."/>
            <person name="Richardson P."/>
        </authorList>
    </citation>
    <scope>NUCLEOTIDE SEQUENCE [LARGE SCALE GENOMIC DNA]</scope>
    <source>
        <strain>ATCC 33223 / DSM 2355 / 39E</strain>
    </source>
</reference>
<feature type="chain" id="PRO_1000139070" description="Acyl carrier protein">
    <location>
        <begin position="1"/>
        <end position="75"/>
    </location>
</feature>
<feature type="domain" description="Carrier" evidence="2">
    <location>
        <begin position="1"/>
        <end position="75"/>
    </location>
</feature>
<feature type="modified residue" description="O-(pantetheine 4'-phosphoryl)serine" evidence="2">
    <location>
        <position position="35"/>
    </location>
</feature>
<sequence length="75" mass="8491">MIFEKVRDIIAEQLGIDPEEITMESSFIDDLGADSLDIVELIMALEEEFDIEIPDEDAEKIKTVGDVVEYLSNLE</sequence>
<dbReference type="EMBL" id="CP000924">
    <property type="protein sequence ID" value="ABY94940.1"/>
    <property type="molecule type" value="Genomic_DNA"/>
</dbReference>
<dbReference type="RefSeq" id="WP_003866668.1">
    <property type="nucleotide sequence ID" value="NC_010321.1"/>
</dbReference>
<dbReference type="SMR" id="B0K9X7"/>
<dbReference type="STRING" id="340099.Teth39_1286"/>
<dbReference type="KEGG" id="tpd:Teth39_1286"/>
<dbReference type="eggNOG" id="COG0236">
    <property type="taxonomic scope" value="Bacteria"/>
</dbReference>
<dbReference type="HOGENOM" id="CLU_108696_5_6_9"/>
<dbReference type="UniPathway" id="UPA00094"/>
<dbReference type="Proteomes" id="UP000002156">
    <property type="component" value="Chromosome"/>
</dbReference>
<dbReference type="GO" id="GO:0005829">
    <property type="term" value="C:cytosol"/>
    <property type="evidence" value="ECO:0007669"/>
    <property type="project" value="TreeGrafter"/>
</dbReference>
<dbReference type="GO" id="GO:0016020">
    <property type="term" value="C:membrane"/>
    <property type="evidence" value="ECO:0007669"/>
    <property type="project" value="GOC"/>
</dbReference>
<dbReference type="GO" id="GO:0000035">
    <property type="term" value="F:acyl binding"/>
    <property type="evidence" value="ECO:0007669"/>
    <property type="project" value="TreeGrafter"/>
</dbReference>
<dbReference type="GO" id="GO:0000036">
    <property type="term" value="F:acyl carrier activity"/>
    <property type="evidence" value="ECO:0007669"/>
    <property type="project" value="UniProtKB-UniRule"/>
</dbReference>
<dbReference type="GO" id="GO:0031177">
    <property type="term" value="F:phosphopantetheine binding"/>
    <property type="evidence" value="ECO:0007669"/>
    <property type="project" value="InterPro"/>
</dbReference>
<dbReference type="GO" id="GO:0009245">
    <property type="term" value="P:lipid A biosynthetic process"/>
    <property type="evidence" value="ECO:0007669"/>
    <property type="project" value="TreeGrafter"/>
</dbReference>
<dbReference type="FunFam" id="1.10.1200.10:FF:000006">
    <property type="entry name" value="Acyl carrier protein"/>
    <property type="match status" value="1"/>
</dbReference>
<dbReference type="Gene3D" id="1.10.1200.10">
    <property type="entry name" value="ACP-like"/>
    <property type="match status" value="1"/>
</dbReference>
<dbReference type="HAMAP" id="MF_01217">
    <property type="entry name" value="Acyl_carrier"/>
    <property type="match status" value="1"/>
</dbReference>
<dbReference type="InterPro" id="IPR003231">
    <property type="entry name" value="ACP"/>
</dbReference>
<dbReference type="InterPro" id="IPR036736">
    <property type="entry name" value="ACP-like_sf"/>
</dbReference>
<dbReference type="InterPro" id="IPR020806">
    <property type="entry name" value="PKS_PP-bd"/>
</dbReference>
<dbReference type="InterPro" id="IPR009081">
    <property type="entry name" value="PP-bd_ACP"/>
</dbReference>
<dbReference type="InterPro" id="IPR006162">
    <property type="entry name" value="Ppantetheine_attach_site"/>
</dbReference>
<dbReference type="NCBIfam" id="TIGR00517">
    <property type="entry name" value="acyl_carrier"/>
    <property type="match status" value="1"/>
</dbReference>
<dbReference type="NCBIfam" id="NF002148">
    <property type="entry name" value="PRK00982.1-2"/>
    <property type="match status" value="1"/>
</dbReference>
<dbReference type="NCBIfam" id="NF002149">
    <property type="entry name" value="PRK00982.1-3"/>
    <property type="match status" value="1"/>
</dbReference>
<dbReference type="NCBIfam" id="NF002150">
    <property type="entry name" value="PRK00982.1-4"/>
    <property type="match status" value="1"/>
</dbReference>
<dbReference type="NCBIfam" id="NF002151">
    <property type="entry name" value="PRK00982.1-5"/>
    <property type="match status" value="1"/>
</dbReference>
<dbReference type="NCBIfam" id="NF009104">
    <property type="entry name" value="PRK12449.1"/>
    <property type="match status" value="1"/>
</dbReference>
<dbReference type="PANTHER" id="PTHR20863">
    <property type="entry name" value="ACYL CARRIER PROTEIN"/>
    <property type="match status" value="1"/>
</dbReference>
<dbReference type="PANTHER" id="PTHR20863:SF76">
    <property type="entry name" value="CARRIER DOMAIN-CONTAINING PROTEIN"/>
    <property type="match status" value="1"/>
</dbReference>
<dbReference type="Pfam" id="PF00550">
    <property type="entry name" value="PP-binding"/>
    <property type="match status" value="1"/>
</dbReference>
<dbReference type="SMART" id="SM00823">
    <property type="entry name" value="PKS_PP"/>
    <property type="match status" value="1"/>
</dbReference>
<dbReference type="SUPFAM" id="SSF47336">
    <property type="entry name" value="ACP-like"/>
    <property type="match status" value="1"/>
</dbReference>
<dbReference type="PROSITE" id="PS50075">
    <property type="entry name" value="CARRIER"/>
    <property type="match status" value="1"/>
</dbReference>
<dbReference type="PROSITE" id="PS00012">
    <property type="entry name" value="PHOSPHOPANTETHEINE"/>
    <property type="match status" value="1"/>
</dbReference>
<name>ACP_THEP3</name>
<accession>B0K9X7</accession>
<proteinExistence type="inferred from homology"/>